<feature type="chain" id="PRO_1000065458" description="UPF0299 membrane protein NTHI1827">
    <location>
        <begin position="1"/>
        <end position="140"/>
    </location>
</feature>
<feature type="transmembrane region" description="Helical" evidence="1">
    <location>
        <begin position="1"/>
        <end position="21"/>
    </location>
</feature>
<feature type="transmembrane region" description="Helical" evidence="1">
    <location>
        <begin position="33"/>
        <end position="52"/>
    </location>
</feature>
<feature type="transmembrane region" description="Helical" evidence="1">
    <location>
        <begin position="60"/>
        <end position="80"/>
    </location>
</feature>
<feature type="transmembrane region" description="Helical" evidence="1">
    <location>
        <begin position="92"/>
        <end position="112"/>
    </location>
</feature>
<keyword id="KW-0997">Cell inner membrane</keyword>
<keyword id="KW-1003">Cell membrane</keyword>
<keyword id="KW-0472">Membrane</keyword>
<keyword id="KW-0812">Transmembrane</keyword>
<keyword id="KW-1133">Transmembrane helix</keyword>
<accession>Q4QK50</accession>
<gene>
    <name type="ordered locus">NTHI1827</name>
</gene>
<protein>
    <recommendedName>
        <fullName evidence="1">UPF0299 membrane protein NTHI1827</fullName>
    </recommendedName>
</protein>
<proteinExistence type="inferred from homology"/>
<comment type="subcellular location">
    <subcellularLocation>
        <location evidence="1">Cell inner membrane</location>
        <topology evidence="1">Multi-pass membrane protein</topology>
    </subcellularLocation>
</comment>
<comment type="similarity">
    <text evidence="1">Belongs to the UPF0299 family.</text>
</comment>
<sequence length="140" mass="15958">MIQKLFLLVRSLVILSIMLYLGNLIAYYIPSGVPGSIWGLLLLFLGLTTRVIHLNWIYLGASLLIRFMAVLFVPVSVGIIKYSDLLIEQINILLVPNIVSTCVTLLVIGFLGHYLYQMQSFTHKRKKVIKRRENQVKQAN</sequence>
<dbReference type="EMBL" id="CP000057">
    <property type="protein sequence ID" value="AAX88597.1"/>
    <property type="molecule type" value="Genomic_DNA"/>
</dbReference>
<dbReference type="RefSeq" id="WP_005650310.1">
    <property type="nucleotide sequence ID" value="NC_007146.2"/>
</dbReference>
<dbReference type="SMR" id="Q4QK50"/>
<dbReference type="KEGG" id="hit:NTHI1827"/>
<dbReference type="HOGENOM" id="CLU_113736_1_1_6"/>
<dbReference type="Proteomes" id="UP000002525">
    <property type="component" value="Chromosome"/>
</dbReference>
<dbReference type="GO" id="GO:0005886">
    <property type="term" value="C:plasma membrane"/>
    <property type="evidence" value="ECO:0007669"/>
    <property type="project" value="UniProtKB-SubCell"/>
</dbReference>
<dbReference type="HAMAP" id="MF_01144">
    <property type="entry name" value="UPF0299"/>
    <property type="match status" value="1"/>
</dbReference>
<dbReference type="InterPro" id="IPR005538">
    <property type="entry name" value="LrgA/CidA"/>
</dbReference>
<dbReference type="InterPro" id="IPR022957">
    <property type="entry name" value="Uncharacterised_UPF0299"/>
</dbReference>
<dbReference type="NCBIfam" id="NF002494">
    <property type="entry name" value="PRK01821.1"/>
    <property type="match status" value="1"/>
</dbReference>
<dbReference type="PANTHER" id="PTHR33931">
    <property type="entry name" value="HOLIN-LIKE PROTEIN CIDA-RELATED"/>
    <property type="match status" value="1"/>
</dbReference>
<dbReference type="PANTHER" id="PTHR33931:SF5">
    <property type="entry name" value="UPF0299 MEMBRANE PROTEIN YOHJ"/>
    <property type="match status" value="1"/>
</dbReference>
<dbReference type="Pfam" id="PF03788">
    <property type="entry name" value="LrgA"/>
    <property type="match status" value="1"/>
</dbReference>
<name>Y1827_HAEI8</name>
<evidence type="ECO:0000255" key="1">
    <source>
        <dbReference type="HAMAP-Rule" id="MF_01144"/>
    </source>
</evidence>
<organism>
    <name type="scientific">Haemophilus influenzae (strain 86-028NP)</name>
    <dbReference type="NCBI Taxonomy" id="281310"/>
    <lineage>
        <taxon>Bacteria</taxon>
        <taxon>Pseudomonadati</taxon>
        <taxon>Pseudomonadota</taxon>
        <taxon>Gammaproteobacteria</taxon>
        <taxon>Pasteurellales</taxon>
        <taxon>Pasteurellaceae</taxon>
        <taxon>Haemophilus</taxon>
    </lineage>
</organism>
<reference key="1">
    <citation type="journal article" date="2005" name="J. Bacteriol.">
        <title>Genomic sequence of an otitis media isolate of nontypeable Haemophilus influenzae: comparative study with H. influenzae serotype d, strain KW20.</title>
        <authorList>
            <person name="Harrison A."/>
            <person name="Dyer D.W."/>
            <person name="Gillaspy A."/>
            <person name="Ray W.C."/>
            <person name="Mungur R."/>
            <person name="Carson M.B."/>
            <person name="Zhong H."/>
            <person name="Gipson J."/>
            <person name="Gipson M."/>
            <person name="Johnson L.S."/>
            <person name="Lewis L."/>
            <person name="Bakaletz L.O."/>
            <person name="Munson R.S. Jr."/>
        </authorList>
    </citation>
    <scope>NUCLEOTIDE SEQUENCE [LARGE SCALE GENOMIC DNA]</scope>
    <source>
        <strain>86-028NP</strain>
    </source>
</reference>